<accession>Q32D33</accession>
<evidence type="ECO:0000255" key="1">
    <source>
        <dbReference type="HAMAP-Rule" id="MF_01176"/>
    </source>
</evidence>
<evidence type="ECO:0000256" key="2">
    <source>
        <dbReference type="SAM" id="MobiDB-lite"/>
    </source>
</evidence>
<keyword id="KW-0001">2Fe-2S</keyword>
<keyword id="KW-0010">Activator</keyword>
<keyword id="KW-0238">DNA-binding</keyword>
<keyword id="KW-0408">Iron</keyword>
<keyword id="KW-0411">Iron-sulfur</keyword>
<keyword id="KW-0479">Metal-binding</keyword>
<keyword id="KW-1185">Reference proteome</keyword>
<keyword id="KW-0678">Repressor</keyword>
<keyword id="KW-0804">Transcription</keyword>
<keyword id="KW-0805">Transcription regulation</keyword>
<reference key="1">
    <citation type="journal article" date="2005" name="Nucleic Acids Res.">
        <title>Genome dynamics and diversity of Shigella species, the etiologic agents of bacillary dysentery.</title>
        <authorList>
            <person name="Yang F."/>
            <person name="Yang J."/>
            <person name="Zhang X."/>
            <person name="Chen L."/>
            <person name="Jiang Y."/>
            <person name="Yan Y."/>
            <person name="Tang X."/>
            <person name="Wang J."/>
            <person name="Xiong Z."/>
            <person name="Dong J."/>
            <person name="Xue Y."/>
            <person name="Zhu Y."/>
            <person name="Xu X."/>
            <person name="Sun L."/>
            <person name="Chen S."/>
            <person name="Nie H."/>
            <person name="Peng J."/>
            <person name="Xu J."/>
            <person name="Wang Y."/>
            <person name="Yuan Z."/>
            <person name="Wen Y."/>
            <person name="Yao Z."/>
            <person name="Shen Y."/>
            <person name="Qiang B."/>
            <person name="Hou Y."/>
            <person name="Yu J."/>
            <person name="Jin Q."/>
        </authorList>
    </citation>
    <scope>NUCLEOTIDE SEQUENCE [LARGE SCALE GENOMIC DNA]</scope>
    <source>
        <strain>Sd197</strain>
    </source>
</reference>
<feature type="chain" id="PRO_0000268927" description="HTH-type transcriptional regulator IscR">
    <location>
        <begin position="1"/>
        <end position="162"/>
    </location>
</feature>
<feature type="domain" description="HTH rrf2-type" evidence="1">
    <location>
        <begin position="2"/>
        <end position="131"/>
    </location>
</feature>
<feature type="DNA-binding region" description="H-T-H motif" evidence="1">
    <location>
        <begin position="28"/>
        <end position="51"/>
    </location>
</feature>
<feature type="region of interest" description="Disordered" evidence="2">
    <location>
        <begin position="140"/>
        <end position="162"/>
    </location>
</feature>
<feature type="compositionally biased region" description="Basic and acidic residues" evidence="2">
    <location>
        <begin position="143"/>
        <end position="162"/>
    </location>
</feature>
<feature type="binding site" evidence="1">
    <location>
        <position position="92"/>
    </location>
    <ligand>
        <name>[2Fe-2S] cluster</name>
        <dbReference type="ChEBI" id="CHEBI:190135"/>
    </ligand>
</feature>
<feature type="binding site" evidence="1">
    <location>
        <position position="98"/>
    </location>
    <ligand>
        <name>[2Fe-2S] cluster</name>
        <dbReference type="ChEBI" id="CHEBI:190135"/>
    </ligand>
</feature>
<feature type="binding site" evidence="1">
    <location>
        <position position="104"/>
    </location>
    <ligand>
        <name>[2Fe-2S] cluster</name>
        <dbReference type="ChEBI" id="CHEBI:190135"/>
    </ligand>
</feature>
<organism>
    <name type="scientific">Shigella dysenteriae serotype 1 (strain Sd197)</name>
    <dbReference type="NCBI Taxonomy" id="300267"/>
    <lineage>
        <taxon>Bacteria</taxon>
        <taxon>Pseudomonadati</taxon>
        <taxon>Pseudomonadota</taxon>
        <taxon>Gammaproteobacteria</taxon>
        <taxon>Enterobacterales</taxon>
        <taxon>Enterobacteriaceae</taxon>
        <taxon>Shigella</taxon>
    </lineage>
</organism>
<comment type="function">
    <text evidence="1">Regulates the transcription of several operons and genes involved in the biogenesis of Fe-S clusters and Fe-S-containing proteins.</text>
</comment>
<comment type="cofactor">
    <cofactor evidence="1">
        <name>[2Fe-2S] cluster</name>
        <dbReference type="ChEBI" id="CHEBI:190135"/>
    </cofactor>
    <text evidence="1">Binds 1 [2Fe-2S] cluster.</text>
</comment>
<protein>
    <recommendedName>
        <fullName evidence="1">HTH-type transcriptional regulator IscR</fullName>
    </recommendedName>
</protein>
<proteinExistence type="inferred from homology"/>
<dbReference type="EMBL" id="CP000034">
    <property type="protein sequence ID" value="ABB62772.1"/>
    <property type="molecule type" value="Genomic_DNA"/>
</dbReference>
<dbReference type="RefSeq" id="WP_001241357.1">
    <property type="nucleotide sequence ID" value="NC_007606.1"/>
</dbReference>
<dbReference type="RefSeq" id="YP_404263.1">
    <property type="nucleotide sequence ID" value="NC_007606.1"/>
</dbReference>
<dbReference type="SMR" id="Q32D33"/>
<dbReference type="STRING" id="300267.SDY_2727"/>
<dbReference type="EnsemblBacteria" id="ABB62772">
    <property type="protein sequence ID" value="ABB62772"/>
    <property type="gene ID" value="SDY_2727"/>
</dbReference>
<dbReference type="GeneID" id="86947421"/>
<dbReference type="KEGG" id="sdy:SDY_2727"/>
<dbReference type="PATRIC" id="fig|300267.13.peg.3289"/>
<dbReference type="HOGENOM" id="CLU_107144_0_0_6"/>
<dbReference type="Proteomes" id="UP000002716">
    <property type="component" value="Chromosome"/>
</dbReference>
<dbReference type="GO" id="GO:0005829">
    <property type="term" value="C:cytosol"/>
    <property type="evidence" value="ECO:0007669"/>
    <property type="project" value="TreeGrafter"/>
</dbReference>
<dbReference type="GO" id="GO:0051537">
    <property type="term" value="F:2 iron, 2 sulfur cluster binding"/>
    <property type="evidence" value="ECO:0007669"/>
    <property type="project" value="UniProtKB-KW"/>
</dbReference>
<dbReference type="GO" id="GO:0003700">
    <property type="term" value="F:DNA-binding transcription factor activity"/>
    <property type="evidence" value="ECO:0007669"/>
    <property type="project" value="UniProtKB-UniRule"/>
</dbReference>
<dbReference type="GO" id="GO:0003690">
    <property type="term" value="F:double-stranded DNA binding"/>
    <property type="evidence" value="ECO:0007669"/>
    <property type="project" value="UniProtKB-UniRule"/>
</dbReference>
<dbReference type="GO" id="GO:0005506">
    <property type="term" value="F:iron ion binding"/>
    <property type="evidence" value="ECO:0007669"/>
    <property type="project" value="UniProtKB-UniRule"/>
</dbReference>
<dbReference type="FunFam" id="1.10.10.10:FF:000026">
    <property type="entry name" value="HTH-type transcriptional regulator IscR"/>
    <property type="match status" value="1"/>
</dbReference>
<dbReference type="Gene3D" id="1.10.10.10">
    <property type="entry name" value="Winged helix-like DNA-binding domain superfamily/Winged helix DNA-binding domain"/>
    <property type="match status" value="1"/>
</dbReference>
<dbReference type="HAMAP" id="MF_01176">
    <property type="entry name" value="HTH_type_IscR"/>
    <property type="match status" value="1"/>
</dbReference>
<dbReference type="InterPro" id="IPR010242">
    <property type="entry name" value="TF_HTH_IscR"/>
</dbReference>
<dbReference type="InterPro" id="IPR030489">
    <property type="entry name" value="TR_Rrf2-type_CS"/>
</dbReference>
<dbReference type="InterPro" id="IPR000944">
    <property type="entry name" value="Tscrpt_reg_Rrf2"/>
</dbReference>
<dbReference type="InterPro" id="IPR036388">
    <property type="entry name" value="WH-like_DNA-bd_sf"/>
</dbReference>
<dbReference type="InterPro" id="IPR036390">
    <property type="entry name" value="WH_DNA-bd_sf"/>
</dbReference>
<dbReference type="NCBIfam" id="TIGR02010">
    <property type="entry name" value="IscR"/>
    <property type="match status" value="1"/>
</dbReference>
<dbReference type="NCBIfam" id="NF008110">
    <property type="entry name" value="PRK10857.1"/>
    <property type="match status" value="1"/>
</dbReference>
<dbReference type="NCBIfam" id="TIGR00738">
    <property type="entry name" value="rrf2_super"/>
    <property type="match status" value="1"/>
</dbReference>
<dbReference type="PANTHER" id="PTHR33221:SF5">
    <property type="entry name" value="HTH-TYPE TRANSCRIPTIONAL REGULATOR ISCR"/>
    <property type="match status" value="1"/>
</dbReference>
<dbReference type="PANTHER" id="PTHR33221">
    <property type="entry name" value="WINGED HELIX-TURN-HELIX TRANSCRIPTIONAL REGULATOR, RRF2 FAMILY"/>
    <property type="match status" value="1"/>
</dbReference>
<dbReference type="Pfam" id="PF02082">
    <property type="entry name" value="Rrf2"/>
    <property type="match status" value="1"/>
</dbReference>
<dbReference type="SUPFAM" id="SSF46785">
    <property type="entry name" value="Winged helix' DNA-binding domain"/>
    <property type="match status" value="1"/>
</dbReference>
<dbReference type="PROSITE" id="PS01332">
    <property type="entry name" value="HTH_RRF2_1"/>
    <property type="match status" value="1"/>
</dbReference>
<dbReference type="PROSITE" id="PS51197">
    <property type="entry name" value="HTH_RRF2_2"/>
    <property type="match status" value="1"/>
</dbReference>
<gene>
    <name evidence="1" type="primary">iscR</name>
    <name type="ordered locus">SDY_2727</name>
</gene>
<name>ISCR_SHIDS</name>
<sequence length="162" mass="17337">MRLTSKGRYAVTAMLDVALNSEAGPVPLADISERQGISLSYLEQLFSRLRKNGLVSSVRGPGGGYLLGKDASSIAVGEVISAVDESVDATRCQGKGGCQGGDKCLTHALWRDLSDRLTGFLNNITLGELVNNQEVLDVSGRQHTHDAPRTRTQDAIDVKLRA</sequence>